<reference key="1">
    <citation type="journal article" date="2006" name="Science">
        <title>The genome of black cottonwood, Populus trichocarpa (Torr. &amp; Gray).</title>
        <authorList>
            <person name="Tuskan G.A."/>
            <person name="Difazio S."/>
            <person name="Jansson S."/>
            <person name="Bohlmann J."/>
            <person name="Grigoriev I."/>
            <person name="Hellsten U."/>
            <person name="Putnam N."/>
            <person name="Ralph S."/>
            <person name="Rombauts S."/>
            <person name="Salamov A."/>
            <person name="Schein J."/>
            <person name="Sterck L."/>
            <person name="Aerts A."/>
            <person name="Bhalerao R.R."/>
            <person name="Bhalerao R.P."/>
            <person name="Blaudez D."/>
            <person name="Boerjan W."/>
            <person name="Brun A."/>
            <person name="Brunner A."/>
            <person name="Busov V."/>
            <person name="Campbell M."/>
            <person name="Carlson J."/>
            <person name="Chalot M."/>
            <person name="Chapman J."/>
            <person name="Chen G.-L."/>
            <person name="Cooper D."/>
            <person name="Coutinho P.M."/>
            <person name="Couturier J."/>
            <person name="Covert S."/>
            <person name="Cronk Q."/>
            <person name="Cunningham R."/>
            <person name="Davis J."/>
            <person name="Degroeve S."/>
            <person name="Dejardin A."/>
            <person name="dePamphilis C.W."/>
            <person name="Detter J."/>
            <person name="Dirks B."/>
            <person name="Dubchak I."/>
            <person name="Duplessis S."/>
            <person name="Ehlting J."/>
            <person name="Ellis B."/>
            <person name="Gendler K."/>
            <person name="Goodstein D."/>
            <person name="Gribskov M."/>
            <person name="Grimwood J."/>
            <person name="Groover A."/>
            <person name="Gunter L."/>
            <person name="Hamberger B."/>
            <person name="Heinze B."/>
            <person name="Helariutta Y."/>
            <person name="Henrissat B."/>
            <person name="Holligan D."/>
            <person name="Holt R."/>
            <person name="Huang W."/>
            <person name="Islam-Faridi N."/>
            <person name="Jones S."/>
            <person name="Jones-Rhoades M."/>
            <person name="Jorgensen R."/>
            <person name="Joshi C."/>
            <person name="Kangasjaervi J."/>
            <person name="Karlsson J."/>
            <person name="Kelleher C."/>
            <person name="Kirkpatrick R."/>
            <person name="Kirst M."/>
            <person name="Kohler A."/>
            <person name="Kalluri U."/>
            <person name="Larimer F."/>
            <person name="Leebens-Mack J."/>
            <person name="Leple J.-C."/>
            <person name="Locascio P."/>
            <person name="Lou Y."/>
            <person name="Lucas S."/>
            <person name="Martin F."/>
            <person name="Montanini B."/>
            <person name="Napoli C."/>
            <person name="Nelson D.R."/>
            <person name="Nelson C."/>
            <person name="Nieminen K."/>
            <person name="Nilsson O."/>
            <person name="Pereda V."/>
            <person name="Peter G."/>
            <person name="Philippe R."/>
            <person name="Pilate G."/>
            <person name="Poliakov A."/>
            <person name="Razumovskaya J."/>
            <person name="Richardson P."/>
            <person name="Rinaldi C."/>
            <person name="Ritland K."/>
            <person name="Rouze P."/>
            <person name="Ryaboy D."/>
            <person name="Schmutz J."/>
            <person name="Schrader J."/>
            <person name="Segerman B."/>
            <person name="Shin H."/>
            <person name="Siddiqui A."/>
            <person name="Sterky F."/>
            <person name="Terry A."/>
            <person name="Tsai C.-J."/>
            <person name="Uberbacher E."/>
            <person name="Unneberg P."/>
            <person name="Vahala J."/>
            <person name="Wall K."/>
            <person name="Wessler S."/>
            <person name="Yang G."/>
            <person name="Yin T."/>
            <person name="Douglas C."/>
            <person name="Marra M."/>
            <person name="Sandberg G."/>
            <person name="Van de Peer Y."/>
            <person name="Rokhsar D.S."/>
        </authorList>
    </citation>
    <scope>NUCLEOTIDE SEQUENCE [LARGE SCALE GENOMIC DNA]</scope>
    <source>
        <strain>cv. Nisqually</strain>
    </source>
</reference>
<sequence length="353" mass="39549">MTIALGKFTKDENDLFDIMDDWLRRDRFVFVGWSGLLLFPCAYFALGGWFTGTTFVTSWYTHGLASSYLEGCNFLTAAVSTPANSLAHSLLLLWGPEAQGDFTRWCQLGGLWTFVALHGAFGLIGFMLRQFELARSVQLRPYNAIAFSGPIAVFVSVFLIYPLGQSGWFFAPSFGVAAIFRFILFFQGFHNWTLNPFHMMGVAGVLGAALLCAIHGATVENTLFEDGDGANTFRAFNPTQAEETYSMVTANRFWSQIFGVAFSNKRWLHFFMLFVPVTGLWMSALGVVGLALNLRAYDFVSQEIRAAEDPEFETFYTKNILLNEGIRAWMAAQDQPHENLIFPEEVLPRGNAL</sequence>
<comment type="function">
    <text evidence="2">Photosystem II (PSII) is a light-driven water:plastoquinone oxidoreductase that uses light energy to abstract electrons from H(2)O, generating O(2) and a proton gradient subsequently used for ATP formation. It consists of a core antenna complex that captures photons, and an electron transfer chain that converts photonic excitation into a charge separation. The D1/D2 (PsbA/PsbD) reaction center heterodimer binds P680, the primary electron donor of PSII as well as several subsequent electron acceptors. D2 is needed for assembly of a stable PSII complex.</text>
</comment>
<comment type="catalytic activity">
    <reaction evidence="2">
        <text>2 a plastoquinone + 4 hnu + 2 H2O = 2 a plastoquinol + O2</text>
        <dbReference type="Rhea" id="RHEA:36359"/>
        <dbReference type="Rhea" id="RHEA-COMP:9561"/>
        <dbReference type="Rhea" id="RHEA-COMP:9562"/>
        <dbReference type="ChEBI" id="CHEBI:15377"/>
        <dbReference type="ChEBI" id="CHEBI:15379"/>
        <dbReference type="ChEBI" id="CHEBI:17757"/>
        <dbReference type="ChEBI" id="CHEBI:30212"/>
        <dbReference type="ChEBI" id="CHEBI:62192"/>
        <dbReference type="EC" id="1.10.3.9"/>
    </reaction>
</comment>
<comment type="cofactor">
    <text evidence="2">The D1/D2 heterodimer binds P680, chlorophylls that are the primary electron donor of PSII, and subsequent electron acceptors. It shares a non-heme iron and each subunit binds pheophytin, quinone, additional chlorophylls, carotenoids and lipids. There is also a Cl(-1) ion associated with D1 and D2, which is required for oxygen evolution. The PSII complex binds additional chlorophylls, carotenoids and specific lipids.</text>
</comment>
<comment type="subunit">
    <text evidence="2">PSII is composed of 1 copy each of membrane proteins PsbA, PsbB, PsbC, PsbD, PsbE, PsbF, PsbH, PsbI, PsbJ, PsbK, PsbL, PsbM, PsbT, PsbX, PsbY, PsbZ, Psb30/Ycf12, at least 3 peripheral proteins of the oxygen-evolving complex and a large number of cofactors. It forms dimeric complexes.</text>
</comment>
<comment type="subcellular location">
    <subcellularLocation>
        <location evidence="2">Plastid</location>
        <location evidence="2">Chloroplast thylakoid membrane</location>
        <topology evidence="2">Multi-pass membrane protein</topology>
    </subcellularLocation>
</comment>
<comment type="miscellaneous">
    <text evidence="2">2 of the reaction center chlorophylls (ChlD1 and ChlD2) are entirely coordinated by water.</text>
</comment>
<comment type="similarity">
    <text evidence="2">Belongs to the reaction center PufL/M/PsbA/D family.</text>
</comment>
<geneLocation type="chloroplast"/>
<organism>
    <name type="scientific">Populus trichocarpa</name>
    <name type="common">Western balsam poplar</name>
    <name type="synonym">Populus balsamifera subsp. trichocarpa</name>
    <dbReference type="NCBI Taxonomy" id="3694"/>
    <lineage>
        <taxon>Eukaryota</taxon>
        <taxon>Viridiplantae</taxon>
        <taxon>Streptophyta</taxon>
        <taxon>Embryophyta</taxon>
        <taxon>Tracheophyta</taxon>
        <taxon>Spermatophyta</taxon>
        <taxon>Magnoliopsida</taxon>
        <taxon>eudicotyledons</taxon>
        <taxon>Gunneridae</taxon>
        <taxon>Pentapetalae</taxon>
        <taxon>rosids</taxon>
        <taxon>fabids</taxon>
        <taxon>Malpighiales</taxon>
        <taxon>Salicaceae</taxon>
        <taxon>Saliceae</taxon>
        <taxon>Populus</taxon>
    </lineage>
</organism>
<keyword id="KW-0007">Acetylation</keyword>
<keyword id="KW-0148">Chlorophyll</keyword>
<keyword id="KW-0150">Chloroplast</keyword>
<keyword id="KW-0157">Chromophore</keyword>
<keyword id="KW-0249">Electron transport</keyword>
<keyword id="KW-0408">Iron</keyword>
<keyword id="KW-0460">Magnesium</keyword>
<keyword id="KW-0472">Membrane</keyword>
<keyword id="KW-0479">Metal-binding</keyword>
<keyword id="KW-0560">Oxidoreductase</keyword>
<keyword id="KW-0597">Phosphoprotein</keyword>
<keyword id="KW-0602">Photosynthesis</keyword>
<keyword id="KW-0604">Photosystem II</keyword>
<keyword id="KW-0934">Plastid</keyword>
<keyword id="KW-1185">Reference proteome</keyword>
<keyword id="KW-0793">Thylakoid</keyword>
<keyword id="KW-0812">Transmembrane</keyword>
<keyword id="KW-1133">Transmembrane helix</keyword>
<keyword id="KW-0813">Transport</keyword>
<proteinExistence type="inferred from homology"/>
<protein>
    <recommendedName>
        <fullName evidence="2">Photosystem II D2 protein</fullName>
        <shortName evidence="2">PSII D2 protein</shortName>
        <ecNumber evidence="2">1.10.3.9</ecNumber>
    </recommendedName>
    <alternativeName>
        <fullName evidence="2">Photosystem Q(A) protein</fullName>
    </alternativeName>
</protein>
<accession>A4GYQ4</accession>
<feature type="initiator methionine" description="Removed" evidence="1">
    <location>
        <position position="1"/>
    </location>
</feature>
<feature type="chain" id="PRO_0000359690" description="Photosystem II D2 protein">
    <location>
        <begin position="2"/>
        <end position="353"/>
    </location>
</feature>
<feature type="transmembrane region" description="Helical" evidence="2">
    <location>
        <begin position="41"/>
        <end position="61"/>
    </location>
</feature>
<feature type="transmembrane region" description="Helical" evidence="2">
    <location>
        <begin position="125"/>
        <end position="141"/>
    </location>
</feature>
<feature type="transmembrane region" description="Helical" evidence="2">
    <location>
        <begin position="153"/>
        <end position="166"/>
    </location>
</feature>
<feature type="transmembrane region" description="Helical" evidence="2">
    <location>
        <begin position="208"/>
        <end position="228"/>
    </location>
</feature>
<feature type="transmembrane region" description="Helical" evidence="2">
    <location>
        <begin position="279"/>
        <end position="295"/>
    </location>
</feature>
<feature type="binding site" description="axial binding residue" evidence="2">
    <location>
        <position position="118"/>
    </location>
    <ligand>
        <name>chlorophyll a</name>
        <dbReference type="ChEBI" id="CHEBI:58416"/>
        <label>ChlzD2</label>
    </ligand>
    <ligandPart>
        <name>Mg</name>
        <dbReference type="ChEBI" id="CHEBI:25107"/>
    </ligandPart>
</feature>
<feature type="binding site" evidence="2">
    <location>
        <position position="130"/>
    </location>
    <ligand>
        <name>pheophytin a</name>
        <dbReference type="ChEBI" id="CHEBI:136840"/>
        <label>D2</label>
    </ligand>
</feature>
<feature type="binding site" evidence="2">
    <location>
        <position position="143"/>
    </location>
    <ligand>
        <name>pheophytin a</name>
        <dbReference type="ChEBI" id="CHEBI:136840"/>
        <label>D2</label>
    </ligand>
</feature>
<feature type="binding site" description="axial binding residue" evidence="2">
    <location>
        <position position="198"/>
    </location>
    <ligand>
        <name>chlorophyll a</name>
        <dbReference type="ChEBI" id="CHEBI:58416"/>
        <label>PD2</label>
    </ligand>
    <ligandPart>
        <name>Mg</name>
        <dbReference type="ChEBI" id="CHEBI:25107"/>
    </ligandPart>
</feature>
<feature type="binding site" evidence="2">
    <location>
        <position position="215"/>
    </location>
    <ligand>
        <name>a plastoquinone</name>
        <dbReference type="ChEBI" id="CHEBI:17757"/>
        <label>Q(A)</label>
    </ligand>
</feature>
<feature type="binding site" evidence="2">
    <location>
        <position position="215"/>
    </location>
    <ligand>
        <name>Fe cation</name>
        <dbReference type="ChEBI" id="CHEBI:24875"/>
        <note>ligand shared with heterodimeric partner</note>
    </ligand>
</feature>
<feature type="binding site" evidence="2">
    <location>
        <position position="262"/>
    </location>
    <ligand>
        <name>a plastoquinone</name>
        <dbReference type="ChEBI" id="CHEBI:17757"/>
        <label>Q(A)</label>
    </ligand>
</feature>
<feature type="binding site" evidence="2">
    <location>
        <position position="269"/>
    </location>
    <ligand>
        <name>Fe cation</name>
        <dbReference type="ChEBI" id="CHEBI:24875"/>
        <note>ligand shared with heterodimeric partner</note>
    </ligand>
</feature>
<feature type="modified residue" description="N-acetylthreonine" evidence="1">
    <location>
        <position position="2"/>
    </location>
</feature>
<feature type="modified residue" description="Phosphothreonine" evidence="1">
    <location>
        <position position="2"/>
    </location>
</feature>
<name>PSBD_POPTR</name>
<dbReference type="EC" id="1.10.3.9" evidence="2"/>
<dbReference type="EMBL" id="EF489041">
    <property type="protein sequence ID" value="ABO36698.1"/>
    <property type="molecule type" value="Genomic_DNA"/>
</dbReference>
<dbReference type="RefSeq" id="YP_001109495.1">
    <property type="nucleotide sequence ID" value="NC_009143.1"/>
</dbReference>
<dbReference type="SMR" id="A4GYQ4"/>
<dbReference type="FunCoup" id="A4GYQ4">
    <property type="interactions" value="447"/>
</dbReference>
<dbReference type="STRING" id="3694.A4GYQ4"/>
<dbReference type="GeneID" id="4929654"/>
<dbReference type="KEGG" id="pop:4929654"/>
<dbReference type="eggNOG" id="ENOG502QWJF">
    <property type="taxonomic scope" value="Eukaryota"/>
</dbReference>
<dbReference type="InParanoid" id="A4GYQ4"/>
<dbReference type="OrthoDB" id="809900at2759"/>
<dbReference type="Proteomes" id="UP000006729">
    <property type="component" value="Chloroplast"/>
</dbReference>
<dbReference type="GO" id="GO:0009535">
    <property type="term" value="C:chloroplast thylakoid membrane"/>
    <property type="evidence" value="ECO:0007669"/>
    <property type="project" value="UniProtKB-SubCell"/>
</dbReference>
<dbReference type="GO" id="GO:0009523">
    <property type="term" value="C:photosystem II"/>
    <property type="evidence" value="ECO:0000318"/>
    <property type="project" value="GO_Central"/>
</dbReference>
<dbReference type="GO" id="GO:0016168">
    <property type="term" value="F:chlorophyll binding"/>
    <property type="evidence" value="ECO:0007669"/>
    <property type="project" value="UniProtKB-UniRule"/>
</dbReference>
<dbReference type="GO" id="GO:0045156">
    <property type="term" value="F:electron transporter, transferring electrons within the cyclic electron transport pathway of photosynthesis activity"/>
    <property type="evidence" value="ECO:0007669"/>
    <property type="project" value="InterPro"/>
</dbReference>
<dbReference type="GO" id="GO:0005506">
    <property type="term" value="F:iron ion binding"/>
    <property type="evidence" value="ECO:0007669"/>
    <property type="project" value="UniProtKB-UniRule"/>
</dbReference>
<dbReference type="GO" id="GO:0010242">
    <property type="term" value="F:oxygen evolving activity"/>
    <property type="evidence" value="ECO:0007669"/>
    <property type="project" value="UniProtKB-EC"/>
</dbReference>
<dbReference type="GO" id="GO:0009772">
    <property type="term" value="P:photosynthetic electron transport in photosystem II"/>
    <property type="evidence" value="ECO:0007669"/>
    <property type="project" value="InterPro"/>
</dbReference>
<dbReference type="CDD" id="cd09288">
    <property type="entry name" value="Photosystem-II_D2"/>
    <property type="match status" value="1"/>
</dbReference>
<dbReference type="FunFam" id="1.20.85.10:FF:000001">
    <property type="entry name" value="photosystem II D2 protein-like"/>
    <property type="match status" value="1"/>
</dbReference>
<dbReference type="Gene3D" id="1.20.85.10">
    <property type="entry name" value="Photosystem II protein D1-like"/>
    <property type="match status" value="1"/>
</dbReference>
<dbReference type="HAMAP" id="MF_01383">
    <property type="entry name" value="PSII_PsbD_D2"/>
    <property type="match status" value="1"/>
</dbReference>
<dbReference type="InterPro" id="IPR055266">
    <property type="entry name" value="D1/D2"/>
</dbReference>
<dbReference type="InterPro" id="IPR036854">
    <property type="entry name" value="Photo_II_D1/D2_sf"/>
</dbReference>
<dbReference type="InterPro" id="IPR000484">
    <property type="entry name" value="Photo_RC_L/M"/>
</dbReference>
<dbReference type="InterPro" id="IPR055265">
    <property type="entry name" value="Photo_RC_L/M_CS"/>
</dbReference>
<dbReference type="InterPro" id="IPR005868">
    <property type="entry name" value="PSII_PsbD/D2"/>
</dbReference>
<dbReference type="NCBIfam" id="TIGR01152">
    <property type="entry name" value="psbD"/>
    <property type="match status" value="1"/>
</dbReference>
<dbReference type="PANTHER" id="PTHR33149:SF12">
    <property type="entry name" value="PHOTOSYSTEM II D2 PROTEIN"/>
    <property type="match status" value="1"/>
</dbReference>
<dbReference type="PANTHER" id="PTHR33149">
    <property type="entry name" value="PHOTOSYSTEM II PROTEIN D1"/>
    <property type="match status" value="1"/>
</dbReference>
<dbReference type="Pfam" id="PF00124">
    <property type="entry name" value="Photo_RC"/>
    <property type="match status" value="1"/>
</dbReference>
<dbReference type="PRINTS" id="PR00256">
    <property type="entry name" value="REACTNCENTRE"/>
</dbReference>
<dbReference type="SUPFAM" id="SSF81483">
    <property type="entry name" value="Bacterial photosystem II reaction centre, L and M subunits"/>
    <property type="match status" value="1"/>
</dbReference>
<dbReference type="PROSITE" id="PS00244">
    <property type="entry name" value="REACTION_CENTER"/>
    <property type="match status" value="1"/>
</dbReference>
<evidence type="ECO:0000250" key="1">
    <source>
        <dbReference type="UniProtKB" id="P56761"/>
    </source>
</evidence>
<evidence type="ECO:0000255" key="2">
    <source>
        <dbReference type="HAMAP-Rule" id="MF_01383"/>
    </source>
</evidence>
<gene>
    <name evidence="2" type="primary">psbD</name>
    <name type="ordered locus">Poptr_cp016</name>
</gene>